<keyword id="KW-0067">ATP-binding</keyword>
<keyword id="KW-0238">DNA-binding</keyword>
<keyword id="KW-0479">Metal-binding</keyword>
<keyword id="KW-0547">Nucleotide-binding</keyword>
<keyword id="KW-0678">Repressor</keyword>
<keyword id="KW-0804">Transcription</keyword>
<keyword id="KW-0805">Transcription regulation</keyword>
<keyword id="KW-0862">Zinc</keyword>
<keyword id="KW-0863">Zinc-finger</keyword>
<organism>
    <name type="scientific">Clavibacter michiganensis subsp. michiganensis (strain NCPPB 382)</name>
    <dbReference type="NCBI Taxonomy" id="443906"/>
    <lineage>
        <taxon>Bacteria</taxon>
        <taxon>Bacillati</taxon>
        <taxon>Actinomycetota</taxon>
        <taxon>Actinomycetes</taxon>
        <taxon>Micrococcales</taxon>
        <taxon>Microbacteriaceae</taxon>
        <taxon>Clavibacter</taxon>
    </lineage>
</organism>
<comment type="function">
    <text evidence="1">Negatively regulates transcription of bacterial ribonucleotide reductase nrd genes and operons by binding to NrdR-boxes.</text>
</comment>
<comment type="cofactor">
    <cofactor evidence="1">
        <name>Zn(2+)</name>
        <dbReference type="ChEBI" id="CHEBI:29105"/>
    </cofactor>
    <text evidence="1">Binds 1 zinc ion.</text>
</comment>
<comment type="similarity">
    <text evidence="1">Belongs to the NrdR family.</text>
</comment>
<proteinExistence type="inferred from homology"/>
<dbReference type="EMBL" id="AM711867">
    <property type="protein sequence ID" value="CAN01903.1"/>
    <property type="molecule type" value="Genomic_DNA"/>
</dbReference>
<dbReference type="RefSeq" id="WP_012038534.1">
    <property type="nucleotide sequence ID" value="NC_009480.1"/>
</dbReference>
<dbReference type="SMR" id="A5CS39"/>
<dbReference type="GeneID" id="92983613"/>
<dbReference type="KEGG" id="cmi:CMM_1847"/>
<dbReference type="eggNOG" id="COG1327">
    <property type="taxonomic scope" value="Bacteria"/>
</dbReference>
<dbReference type="HOGENOM" id="CLU_108412_1_0_11"/>
<dbReference type="OrthoDB" id="9807461at2"/>
<dbReference type="Proteomes" id="UP000001564">
    <property type="component" value="Chromosome"/>
</dbReference>
<dbReference type="GO" id="GO:0005524">
    <property type="term" value="F:ATP binding"/>
    <property type="evidence" value="ECO:0007669"/>
    <property type="project" value="UniProtKB-KW"/>
</dbReference>
<dbReference type="GO" id="GO:0003677">
    <property type="term" value="F:DNA binding"/>
    <property type="evidence" value="ECO:0007669"/>
    <property type="project" value="UniProtKB-KW"/>
</dbReference>
<dbReference type="GO" id="GO:0008270">
    <property type="term" value="F:zinc ion binding"/>
    <property type="evidence" value="ECO:0007669"/>
    <property type="project" value="UniProtKB-UniRule"/>
</dbReference>
<dbReference type="GO" id="GO:0045892">
    <property type="term" value="P:negative regulation of DNA-templated transcription"/>
    <property type="evidence" value="ECO:0007669"/>
    <property type="project" value="UniProtKB-UniRule"/>
</dbReference>
<dbReference type="HAMAP" id="MF_00440">
    <property type="entry name" value="NrdR"/>
    <property type="match status" value="1"/>
</dbReference>
<dbReference type="InterPro" id="IPR005144">
    <property type="entry name" value="ATP-cone_dom"/>
</dbReference>
<dbReference type="InterPro" id="IPR055173">
    <property type="entry name" value="NrdR-like_N"/>
</dbReference>
<dbReference type="InterPro" id="IPR003796">
    <property type="entry name" value="RNR_NrdR-like"/>
</dbReference>
<dbReference type="NCBIfam" id="TIGR00244">
    <property type="entry name" value="transcriptional regulator NrdR"/>
    <property type="match status" value="1"/>
</dbReference>
<dbReference type="PANTHER" id="PTHR30455">
    <property type="entry name" value="TRANSCRIPTIONAL REPRESSOR NRDR"/>
    <property type="match status" value="1"/>
</dbReference>
<dbReference type="PANTHER" id="PTHR30455:SF2">
    <property type="entry name" value="TRANSCRIPTIONAL REPRESSOR NRDR"/>
    <property type="match status" value="1"/>
</dbReference>
<dbReference type="Pfam" id="PF03477">
    <property type="entry name" value="ATP-cone"/>
    <property type="match status" value="1"/>
</dbReference>
<dbReference type="Pfam" id="PF22811">
    <property type="entry name" value="Zn_ribbon_NrdR"/>
    <property type="match status" value="1"/>
</dbReference>
<dbReference type="PROSITE" id="PS51161">
    <property type="entry name" value="ATP_CONE"/>
    <property type="match status" value="1"/>
</dbReference>
<reference key="1">
    <citation type="journal article" date="2008" name="J. Bacteriol.">
        <title>The genome sequence of the tomato-pathogenic actinomycete Clavibacter michiganensis subsp. michiganensis NCPPB382 reveals a large island involved in pathogenicity.</title>
        <authorList>
            <person name="Gartemann K.-H."/>
            <person name="Abt B."/>
            <person name="Bekel T."/>
            <person name="Burger A."/>
            <person name="Engemann J."/>
            <person name="Fluegel M."/>
            <person name="Gaigalat L."/>
            <person name="Goesmann A."/>
            <person name="Graefen I."/>
            <person name="Kalinowski J."/>
            <person name="Kaup O."/>
            <person name="Kirchner O."/>
            <person name="Krause L."/>
            <person name="Linke B."/>
            <person name="McHardy A."/>
            <person name="Meyer F."/>
            <person name="Pohle S."/>
            <person name="Rueckert C."/>
            <person name="Schneiker S."/>
            <person name="Zellermann E.-M."/>
            <person name="Puehler A."/>
            <person name="Eichenlaub R."/>
            <person name="Kaiser O."/>
            <person name="Bartels D."/>
        </authorList>
    </citation>
    <scope>NUCLEOTIDE SEQUENCE [LARGE SCALE GENOMIC DNA]</scope>
    <source>
        <strain>NCPPB 382</strain>
    </source>
</reference>
<accession>A5CS39</accession>
<gene>
    <name evidence="1" type="primary">nrdR</name>
    <name type="ordered locus">CMM_1847</name>
</gene>
<sequence>MFCPFCRHPDSRVVDSRTSDDGLSIRRRRQCPECGRRFSTTETASLSVIKRNGVVEPFSREKIVTGVRKACQGRPVTDTDLAVLAQRVEEAIRATGASQIEANDIGLSILPPLRELDEVAYLRFASVYQGFDSLDDFESAIAQLRVAHAATPDADAL</sequence>
<name>NRDR_CLAM3</name>
<evidence type="ECO:0000255" key="1">
    <source>
        <dbReference type="HAMAP-Rule" id="MF_00440"/>
    </source>
</evidence>
<feature type="chain" id="PRO_1000080731" description="Transcriptional repressor NrdR">
    <location>
        <begin position="1"/>
        <end position="157"/>
    </location>
</feature>
<feature type="domain" description="ATP-cone" evidence="1">
    <location>
        <begin position="46"/>
        <end position="136"/>
    </location>
</feature>
<feature type="zinc finger region" evidence="1">
    <location>
        <begin position="3"/>
        <end position="34"/>
    </location>
</feature>
<protein>
    <recommendedName>
        <fullName evidence="1">Transcriptional repressor NrdR</fullName>
    </recommendedName>
</protein>